<reference key="1">
    <citation type="journal article" date="1997" name="Nature">
        <title>The complete genome sequence of the gastric pathogen Helicobacter pylori.</title>
        <authorList>
            <person name="Tomb J.-F."/>
            <person name="White O."/>
            <person name="Kerlavage A.R."/>
            <person name="Clayton R.A."/>
            <person name="Sutton G.G."/>
            <person name="Fleischmann R.D."/>
            <person name="Ketchum K.A."/>
            <person name="Klenk H.-P."/>
            <person name="Gill S.R."/>
            <person name="Dougherty B.A."/>
            <person name="Nelson K.E."/>
            <person name="Quackenbush J."/>
            <person name="Zhou L."/>
            <person name="Kirkness E.F."/>
            <person name="Peterson S.N."/>
            <person name="Loftus B.J."/>
            <person name="Richardson D.L."/>
            <person name="Dodson R.J."/>
            <person name="Khalak H.G."/>
            <person name="Glodek A."/>
            <person name="McKenney K."/>
            <person name="FitzGerald L.M."/>
            <person name="Lee N."/>
            <person name="Adams M.D."/>
            <person name="Hickey E.K."/>
            <person name="Berg D.E."/>
            <person name="Gocayne J.D."/>
            <person name="Utterback T.R."/>
            <person name="Peterson J.D."/>
            <person name="Kelley J.M."/>
            <person name="Cotton M.D."/>
            <person name="Weidman J.F."/>
            <person name="Fujii C."/>
            <person name="Bowman C."/>
            <person name="Watthey L."/>
            <person name="Wallin E."/>
            <person name="Hayes W.S."/>
            <person name="Borodovsky M."/>
            <person name="Karp P.D."/>
            <person name="Smith H.O."/>
            <person name="Fraser C.M."/>
            <person name="Venter J.C."/>
        </authorList>
    </citation>
    <scope>NUCLEOTIDE SEQUENCE [LARGE SCALE GENOMIC DNA]</scope>
    <source>
        <strain>ATCC 700392 / 26695</strain>
    </source>
</reference>
<accession>P56140</accession>
<gene>
    <name type="primary">hemC</name>
    <name type="ordered locus">HP_0237</name>
</gene>
<sequence length="306" mass="33940">MGNLVIGSRGSELALWQANHIKERLKKECLIESEIQIVKTKGDKILDTPLNKIGGKGLFTKELEELLLKGAIDLAVHSLKDVPVVFEKGLDLACITKRADVRDTFLSVKFPDLMSLPKGAKVGTTSLRRSMQIKLKRQDLDTESLRGNVQTRLKKLECGEFDAIILAEAGLCRLEIQGAKYRKAFSVEEMIPSMGQGALGVEMLKNHKHFATLQKLNDEKSAFCCRLEREFIKGLNGGCQIPIGVHASLMGDRVKIQAVLGLPNGKEVITKEKQGDKTKAFDLVQELLEEFLQSGAKEILEKAQLF</sequence>
<name>HEM3_HELPY</name>
<keyword id="KW-0627">Porphyrin biosynthesis</keyword>
<keyword id="KW-1185">Reference proteome</keyword>
<keyword id="KW-0808">Transferase</keyword>
<evidence type="ECO:0000250" key="1"/>
<evidence type="ECO:0000305" key="2"/>
<proteinExistence type="inferred from homology"/>
<protein>
    <recommendedName>
        <fullName>Porphobilinogen deaminase</fullName>
        <shortName>PBG</shortName>
        <ecNumber>2.5.1.61</ecNumber>
    </recommendedName>
    <alternativeName>
        <fullName>Hydroxymethylbilane synthase</fullName>
        <shortName>HMBS</shortName>
    </alternativeName>
    <alternativeName>
        <fullName>Pre-uroporphyrinogen synthase</fullName>
    </alternativeName>
</protein>
<dbReference type="EC" id="2.5.1.61"/>
<dbReference type="EMBL" id="AE000511">
    <property type="protein sequence ID" value="AAD07304.1"/>
    <property type="molecule type" value="Genomic_DNA"/>
</dbReference>
<dbReference type="PIR" id="E64549">
    <property type="entry name" value="E64549"/>
</dbReference>
<dbReference type="RefSeq" id="NP_207035.1">
    <property type="nucleotide sequence ID" value="NC_000915.1"/>
</dbReference>
<dbReference type="RefSeq" id="WP_000527585.1">
    <property type="nucleotide sequence ID" value="NC_018939.1"/>
</dbReference>
<dbReference type="SMR" id="P56140"/>
<dbReference type="FunCoup" id="P56140">
    <property type="interactions" value="360"/>
</dbReference>
<dbReference type="STRING" id="85962.HP_0237"/>
<dbReference type="PaxDb" id="85962-C694_01195"/>
<dbReference type="EnsemblBacteria" id="AAD07304">
    <property type="protein sequence ID" value="AAD07304"/>
    <property type="gene ID" value="HP_0237"/>
</dbReference>
<dbReference type="KEGG" id="heo:C694_01195"/>
<dbReference type="KEGG" id="hpy:HP_0237"/>
<dbReference type="PATRIC" id="fig|85962.47.peg.256"/>
<dbReference type="eggNOG" id="COG0181">
    <property type="taxonomic scope" value="Bacteria"/>
</dbReference>
<dbReference type="InParanoid" id="P56140"/>
<dbReference type="OrthoDB" id="9810298at2"/>
<dbReference type="PhylomeDB" id="P56140"/>
<dbReference type="UniPathway" id="UPA00251">
    <property type="reaction ID" value="UER00319"/>
</dbReference>
<dbReference type="Proteomes" id="UP000000429">
    <property type="component" value="Chromosome"/>
</dbReference>
<dbReference type="GO" id="GO:0005737">
    <property type="term" value="C:cytoplasm"/>
    <property type="evidence" value="ECO:0000318"/>
    <property type="project" value="GO_Central"/>
</dbReference>
<dbReference type="GO" id="GO:0004418">
    <property type="term" value="F:hydroxymethylbilane synthase activity"/>
    <property type="evidence" value="ECO:0000318"/>
    <property type="project" value="GO_Central"/>
</dbReference>
<dbReference type="GO" id="GO:0006783">
    <property type="term" value="P:heme biosynthetic process"/>
    <property type="evidence" value="ECO:0000318"/>
    <property type="project" value="GO_Central"/>
</dbReference>
<dbReference type="GO" id="GO:0006782">
    <property type="term" value="P:protoporphyrinogen IX biosynthetic process"/>
    <property type="evidence" value="ECO:0007669"/>
    <property type="project" value="UniProtKB-UniRule"/>
</dbReference>
<dbReference type="CDD" id="cd13646">
    <property type="entry name" value="PBP2_EcHMBS_like"/>
    <property type="match status" value="1"/>
</dbReference>
<dbReference type="FunFam" id="3.40.190.10:FF:000004">
    <property type="entry name" value="Porphobilinogen deaminase"/>
    <property type="match status" value="1"/>
</dbReference>
<dbReference type="FunFam" id="3.40.190.10:FF:000005">
    <property type="entry name" value="Porphobilinogen deaminase"/>
    <property type="match status" value="1"/>
</dbReference>
<dbReference type="Gene3D" id="3.40.190.10">
    <property type="entry name" value="Periplasmic binding protein-like II"/>
    <property type="match status" value="2"/>
</dbReference>
<dbReference type="Gene3D" id="3.30.160.40">
    <property type="entry name" value="Porphobilinogen deaminase, C-terminal domain"/>
    <property type="match status" value="1"/>
</dbReference>
<dbReference type="HAMAP" id="MF_00260">
    <property type="entry name" value="Porphobil_deam"/>
    <property type="match status" value="1"/>
</dbReference>
<dbReference type="InterPro" id="IPR000860">
    <property type="entry name" value="HemC"/>
</dbReference>
<dbReference type="InterPro" id="IPR022419">
    <property type="entry name" value="Porphobilin_deaminase_cofac_BS"/>
</dbReference>
<dbReference type="InterPro" id="IPR022417">
    <property type="entry name" value="Porphobilin_deaminase_N"/>
</dbReference>
<dbReference type="InterPro" id="IPR022418">
    <property type="entry name" value="Porphobilinogen_deaminase_C"/>
</dbReference>
<dbReference type="InterPro" id="IPR036803">
    <property type="entry name" value="Porphobilinogen_deaminase_C_sf"/>
</dbReference>
<dbReference type="NCBIfam" id="TIGR00212">
    <property type="entry name" value="hemC"/>
    <property type="match status" value="1"/>
</dbReference>
<dbReference type="PANTHER" id="PTHR11557">
    <property type="entry name" value="PORPHOBILINOGEN DEAMINASE"/>
    <property type="match status" value="1"/>
</dbReference>
<dbReference type="PANTHER" id="PTHR11557:SF0">
    <property type="entry name" value="PORPHOBILINOGEN DEAMINASE"/>
    <property type="match status" value="1"/>
</dbReference>
<dbReference type="Pfam" id="PF01379">
    <property type="entry name" value="Porphobil_deam"/>
    <property type="match status" value="1"/>
</dbReference>
<dbReference type="Pfam" id="PF03900">
    <property type="entry name" value="Porphobil_deamC"/>
    <property type="match status" value="1"/>
</dbReference>
<dbReference type="PIRSF" id="PIRSF001438">
    <property type="entry name" value="4pyrrol_synth_OHMeBilane_synth"/>
    <property type="match status" value="1"/>
</dbReference>
<dbReference type="PRINTS" id="PR00151">
    <property type="entry name" value="PORPHBDMNASE"/>
</dbReference>
<dbReference type="SUPFAM" id="SSF53850">
    <property type="entry name" value="Periplasmic binding protein-like II"/>
    <property type="match status" value="1"/>
</dbReference>
<dbReference type="SUPFAM" id="SSF54782">
    <property type="entry name" value="Porphobilinogen deaminase (hydroxymethylbilane synthase), C-terminal domain"/>
    <property type="match status" value="1"/>
</dbReference>
<dbReference type="PROSITE" id="PS00533">
    <property type="entry name" value="PORPHOBILINOGEN_DEAM"/>
    <property type="match status" value="1"/>
</dbReference>
<comment type="function">
    <text evidence="1">Tetrapolymerization of the monopyrrole PBG into the hydroxymethylbilane pre-uroporphyrinogen in several discrete steps.</text>
</comment>
<comment type="catalytic activity">
    <reaction>
        <text>4 porphobilinogen + H2O = hydroxymethylbilane + 4 NH4(+)</text>
        <dbReference type="Rhea" id="RHEA:13185"/>
        <dbReference type="ChEBI" id="CHEBI:15377"/>
        <dbReference type="ChEBI" id="CHEBI:28938"/>
        <dbReference type="ChEBI" id="CHEBI:57845"/>
        <dbReference type="ChEBI" id="CHEBI:58126"/>
        <dbReference type="EC" id="2.5.1.61"/>
    </reaction>
</comment>
<comment type="cofactor">
    <cofactor evidence="1">
        <name>dipyrromethane</name>
        <dbReference type="ChEBI" id="CHEBI:60342"/>
    </cofactor>
    <text evidence="1">Binds 1 dipyrromethane group covalently.</text>
</comment>
<comment type="pathway">
    <text>Porphyrin-containing compound metabolism; protoporphyrin-IX biosynthesis; coproporphyrinogen-III from 5-aminolevulinate: step 2/4.</text>
</comment>
<comment type="subunit">
    <text evidence="1">Monomer.</text>
</comment>
<comment type="miscellaneous">
    <text evidence="1">The porphobilinogen subunits are added to the dipyrromethane group.</text>
</comment>
<comment type="similarity">
    <text evidence="2">Belongs to the HMBS family.</text>
</comment>
<feature type="chain" id="PRO_0000142945" description="Porphobilinogen deaminase">
    <location>
        <begin position="1"/>
        <end position="306"/>
    </location>
</feature>
<feature type="modified residue" description="S-(dipyrrolylmethanemethyl)cysteine" evidence="1">
    <location>
        <position position="239"/>
    </location>
</feature>
<organism>
    <name type="scientific">Helicobacter pylori (strain ATCC 700392 / 26695)</name>
    <name type="common">Campylobacter pylori</name>
    <dbReference type="NCBI Taxonomy" id="85962"/>
    <lineage>
        <taxon>Bacteria</taxon>
        <taxon>Pseudomonadati</taxon>
        <taxon>Campylobacterota</taxon>
        <taxon>Epsilonproteobacteria</taxon>
        <taxon>Campylobacterales</taxon>
        <taxon>Helicobacteraceae</taxon>
        <taxon>Helicobacter</taxon>
    </lineage>
</organism>